<name>COBS_PSEA6</name>
<keyword id="KW-0997">Cell inner membrane</keyword>
<keyword id="KW-1003">Cell membrane</keyword>
<keyword id="KW-0169">Cobalamin biosynthesis</keyword>
<keyword id="KW-0460">Magnesium</keyword>
<keyword id="KW-0472">Membrane</keyword>
<keyword id="KW-0808">Transferase</keyword>
<keyword id="KW-0812">Transmembrane</keyword>
<keyword id="KW-1133">Transmembrane helix</keyword>
<organism>
    <name type="scientific">Pseudoalteromonas atlantica (strain T6c / ATCC BAA-1087)</name>
    <dbReference type="NCBI Taxonomy" id="3042615"/>
    <lineage>
        <taxon>Bacteria</taxon>
        <taxon>Pseudomonadati</taxon>
        <taxon>Pseudomonadota</taxon>
        <taxon>Gammaproteobacteria</taxon>
        <taxon>Alteromonadales</taxon>
        <taxon>Alteromonadaceae</taxon>
        <taxon>Paraglaciecola</taxon>
    </lineage>
</organism>
<accession>Q15WS4</accession>
<comment type="function">
    <text evidence="1">Joins adenosylcobinamide-GDP and alpha-ribazole to generate adenosylcobalamin (Ado-cobalamin). Also synthesizes adenosylcobalamin 5'-phosphate from adenosylcobinamide-GDP and alpha-ribazole 5'-phosphate.</text>
</comment>
<comment type="catalytic activity">
    <reaction evidence="1">
        <text>alpha-ribazole + adenosylcob(III)inamide-GDP = adenosylcob(III)alamin + GMP + H(+)</text>
        <dbReference type="Rhea" id="RHEA:16049"/>
        <dbReference type="ChEBI" id="CHEBI:10329"/>
        <dbReference type="ChEBI" id="CHEBI:15378"/>
        <dbReference type="ChEBI" id="CHEBI:18408"/>
        <dbReference type="ChEBI" id="CHEBI:58115"/>
        <dbReference type="ChEBI" id="CHEBI:60487"/>
        <dbReference type="EC" id="2.7.8.26"/>
    </reaction>
</comment>
<comment type="catalytic activity">
    <reaction evidence="1">
        <text>alpha-ribazole 5'-phosphate + adenosylcob(III)inamide-GDP = adenosylcob(III)alamin 5'-phosphate + GMP + H(+)</text>
        <dbReference type="Rhea" id="RHEA:23560"/>
        <dbReference type="ChEBI" id="CHEBI:15378"/>
        <dbReference type="ChEBI" id="CHEBI:57918"/>
        <dbReference type="ChEBI" id="CHEBI:58115"/>
        <dbReference type="ChEBI" id="CHEBI:60487"/>
        <dbReference type="ChEBI" id="CHEBI:60493"/>
        <dbReference type="EC" id="2.7.8.26"/>
    </reaction>
</comment>
<comment type="cofactor">
    <cofactor evidence="1">
        <name>Mg(2+)</name>
        <dbReference type="ChEBI" id="CHEBI:18420"/>
    </cofactor>
</comment>
<comment type="pathway">
    <text evidence="1">Cofactor biosynthesis; adenosylcobalamin biosynthesis; adenosylcobalamin from cob(II)yrinate a,c-diamide: step 7/7.</text>
</comment>
<comment type="subcellular location">
    <subcellularLocation>
        <location evidence="1">Cell inner membrane</location>
        <topology evidence="1">Multi-pass membrane protein</topology>
    </subcellularLocation>
</comment>
<comment type="similarity">
    <text evidence="1">Belongs to the CobS family.</text>
</comment>
<reference key="1">
    <citation type="submission" date="2006-06" db="EMBL/GenBank/DDBJ databases">
        <title>Complete sequence of Pseudoalteromonas atlantica T6c.</title>
        <authorList>
            <consortium name="US DOE Joint Genome Institute"/>
            <person name="Copeland A."/>
            <person name="Lucas S."/>
            <person name="Lapidus A."/>
            <person name="Barry K."/>
            <person name="Detter J.C."/>
            <person name="Glavina del Rio T."/>
            <person name="Hammon N."/>
            <person name="Israni S."/>
            <person name="Dalin E."/>
            <person name="Tice H."/>
            <person name="Pitluck S."/>
            <person name="Saunders E."/>
            <person name="Brettin T."/>
            <person name="Bruce D."/>
            <person name="Han C."/>
            <person name="Tapia R."/>
            <person name="Gilna P."/>
            <person name="Schmutz J."/>
            <person name="Larimer F."/>
            <person name="Land M."/>
            <person name="Hauser L."/>
            <person name="Kyrpides N."/>
            <person name="Kim E."/>
            <person name="Karls A.C."/>
            <person name="Bartlett D."/>
            <person name="Higgins B.P."/>
            <person name="Richardson P."/>
        </authorList>
    </citation>
    <scope>NUCLEOTIDE SEQUENCE [LARGE SCALE GENOMIC DNA]</scope>
    <source>
        <strain>T6c / ATCC BAA-1087</strain>
    </source>
</reference>
<dbReference type="EC" id="2.7.8.26" evidence="1"/>
<dbReference type="EMBL" id="CP000388">
    <property type="protein sequence ID" value="ABG39664.1"/>
    <property type="molecule type" value="Genomic_DNA"/>
</dbReference>
<dbReference type="RefSeq" id="WP_011573999.1">
    <property type="nucleotide sequence ID" value="NC_008228.1"/>
</dbReference>
<dbReference type="STRING" id="342610.Patl_1138"/>
<dbReference type="KEGG" id="pat:Patl_1138"/>
<dbReference type="eggNOG" id="COG0368">
    <property type="taxonomic scope" value="Bacteria"/>
</dbReference>
<dbReference type="HOGENOM" id="CLU_057426_1_1_6"/>
<dbReference type="OrthoDB" id="9794626at2"/>
<dbReference type="UniPathway" id="UPA00148">
    <property type="reaction ID" value="UER00238"/>
</dbReference>
<dbReference type="Proteomes" id="UP000001981">
    <property type="component" value="Chromosome"/>
</dbReference>
<dbReference type="GO" id="GO:0005886">
    <property type="term" value="C:plasma membrane"/>
    <property type="evidence" value="ECO:0007669"/>
    <property type="project" value="UniProtKB-SubCell"/>
</dbReference>
<dbReference type="GO" id="GO:0051073">
    <property type="term" value="F:adenosylcobinamide-GDP ribazoletransferase activity"/>
    <property type="evidence" value="ECO:0007669"/>
    <property type="project" value="UniProtKB-UniRule"/>
</dbReference>
<dbReference type="GO" id="GO:0008818">
    <property type="term" value="F:cobalamin 5'-phosphate synthase activity"/>
    <property type="evidence" value="ECO:0007669"/>
    <property type="project" value="UniProtKB-UniRule"/>
</dbReference>
<dbReference type="GO" id="GO:0009236">
    <property type="term" value="P:cobalamin biosynthetic process"/>
    <property type="evidence" value="ECO:0007669"/>
    <property type="project" value="UniProtKB-UniRule"/>
</dbReference>
<dbReference type="HAMAP" id="MF_00719">
    <property type="entry name" value="CobS"/>
    <property type="match status" value="1"/>
</dbReference>
<dbReference type="InterPro" id="IPR003805">
    <property type="entry name" value="CobS"/>
</dbReference>
<dbReference type="NCBIfam" id="TIGR00317">
    <property type="entry name" value="cobS"/>
    <property type="match status" value="1"/>
</dbReference>
<dbReference type="NCBIfam" id="NF001277">
    <property type="entry name" value="PRK00235.1-3"/>
    <property type="match status" value="1"/>
</dbReference>
<dbReference type="PANTHER" id="PTHR34148">
    <property type="entry name" value="ADENOSYLCOBINAMIDE-GDP RIBAZOLETRANSFERASE"/>
    <property type="match status" value="1"/>
</dbReference>
<dbReference type="PANTHER" id="PTHR34148:SF1">
    <property type="entry name" value="ADENOSYLCOBINAMIDE-GDP RIBAZOLETRANSFERASE"/>
    <property type="match status" value="1"/>
</dbReference>
<dbReference type="Pfam" id="PF02654">
    <property type="entry name" value="CobS"/>
    <property type="match status" value="1"/>
</dbReference>
<feature type="chain" id="PRO_1000072779" description="Adenosylcobinamide-GDP ribazoletransferase">
    <location>
        <begin position="1"/>
        <end position="269"/>
    </location>
</feature>
<feature type="transmembrane region" description="Helical" evidence="1">
    <location>
        <begin position="8"/>
        <end position="28"/>
    </location>
</feature>
<feature type="transmembrane region" description="Helical" evidence="1">
    <location>
        <begin position="41"/>
        <end position="61"/>
    </location>
</feature>
<feature type="transmembrane region" description="Helical" evidence="1">
    <location>
        <begin position="70"/>
        <end position="90"/>
    </location>
</feature>
<feature type="transmembrane region" description="Helical" evidence="1">
    <location>
        <begin position="114"/>
        <end position="136"/>
    </location>
</feature>
<feature type="transmembrane region" description="Helical" evidence="1">
    <location>
        <begin position="196"/>
        <end position="216"/>
    </location>
</feature>
<evidence type="ECO:0000255" key="1">
    <source>
        <dbReference type="HAMAP-Rule" id="MF_00719"/>
    </source>
</evidence>
<gene>
    <name evidence="1" type="primary">cobS</name>
    <name type="ordered locus">Patl_1138</name>
</gene>
<protein>
    <recommendedName>
        <fullName evidence="1">Adenosylcobinamide-GDP ribazoletransferase</fullName>
        <ecNumber evidence="1">2.7.8.26</ecNumber>
    </recommendedName>
    <alternativeName>
        <fullName evidence="1">Cobalamin synthase</fullName>
    </alternativeName>
    <alternativeName>
        <fullName evidence="1">Cobalamin-5'-phosphate synthase</fullName>
    </alternativeName>
</protein>
<sequence>MTRFLNYQFNLILLAVSFFTRLPVPTAIDYSPQKLHQAGRYFPLVGWLLAALLSAFYCFMLPYLGREPTVCLLIIFSLMLTGAIHEDGLADTADGFWGGQSITRKLTIMKDSQIGTYGTCALICALLSKFILLSSLAADQHLLLALAIAYPLSRGLAISHVQHLAYARKNSDNSKSDSLAQPMQPRVLLWLLASSVPAVLWLPLSSAILVIVSACVLRFALKHWFKKHIDGYTGDCLGFAQQTQELLIYLLLIITLPKTVNEQTIGFLL</sequence>
<proteinExistence type="inferred from homology"/>